<reference key="1">
    <citation type="journal article" date="2002" name="Proc. Natl. Acad. Sci. U.S.A.">
        <title>The genome sequence of Bifidobacterium longum reflects its adaptation to the human gastrointestinal tract.</title>
        <authorList>
            <person name="Schell M.A."/>
            <person name="Karmirantzou M."/>
            <person name="Snel B."/>
            <person name="Vilanova D."/>
            <person name="Berger B."/>
            <person name="Pessi G."/>
            <person name="Zwahlen M.-C."/>
            <person name="Desiere F."/>
            <person name="Bork P."/>
            <person name="Delley M."/>
            <person name="Pridmore R.D."/>
            <person name="Arigoni F."/>
        </authorList>
    </citation>
    <scope>NUCLEOTIDE SEQUENCE [LARGE SCALE GENOMIC DNA]</scope>
    <source>
        <strain>NCC 2705</strain>
    </source>
</reference>
<keyword id="KW-0963">Cytoplasm</keyword>
<keyword id="KW-0488">Methylation</keyword>
<keyword id="KW-0648">Protein biosynthesis</keyword>
<keyword id="KW-1185">Reference proteome</keyword>
<organism>
    <name type="scientific">Bifidobacterium longum (strain NCC 2705)</name>
    <dbReference type="NCBI Taxonomy" id="206672"/>
    <lineage>
        <taxon>Bacteria</taxon>
        <taxon>Bacillati</taxon>
        <taxon>Actinomycetota</taxon>
        <taxon>Actinomycetes</taxon>
        <taxon>Bifidobacteriales</taxon>
        <taxon>Bifidobacteriaceae</taxon>
        <taxon>Bifidobacterium</taxon>
    </lineage>
</organism>
<dbReference type="EMBL" id="AE014295">
    <property type="protein sequence ID" value="AAN25496.1"/>
    <property type="molecule type" value="Genomic_DNA"/>
</dbReference>
<dbReference type="RefSeq" id="NP_696860.1">
    <property type="nucleotide sequence ID" value="NC_004307.2"/>
</dbReference>
<dbReference type="RefSeq" id="WP_007052437.1">
    <property type="nucleotide sequence ID" value="NC_004307.2"/>
</dbReference>
<dbReference type="SMR" id="Q8G3P5"/>
<dbReference type="STRING" id="206672.BL1712"/>
<dbReference type="EnsemblBacteria" id="AAN25496">
    <property type="protein sequence ID" value="AAN25496"/>
    <property type="gene ID" value="BL1712"/>
</dbReference>
<dbReference type="GeneID" id="69578765"/>
<dbReference type="KEGG" id="blo:BL1712"/>
<dbReference type="PATRIC" id="fig|206672.9.peg.1765"/>
<dbReference type="HOGENOM" id="CLU_036856_0_1_11"/>
<dbReference type="OrthoDB" id="9806673at2"/>
<dbReference type="PhylomeDB" id="Q8G3P5"/>
<dbReference type="Proteomes" id="UP000000439">
    <property type="component" value="Chromosome"/>
</dbReference>
<dbReference type="GO" id="GO:0005737">
    <property type="term" value="C:cytoplasm"/>
    <property type="evidence" value="ECO:0007669"/>
    <property type="project" value="UniProtKB-SubCell"/>
</dbReference>
<dbReference type="GO" id="GO:0016149">
    <property type="term" value="F:translation release factor activity, codon specific"/>
    <property type="evidence" value="ECO:0007669"/>
    <property type="project" value="UniProtKB-UniRule"/>
</dbReference>
<dbReference type="FunFam" id="3.30.160.20:FF:000004">
    <property type="entry name" value="Peptide chain release factor 1"/>
    <property type="match status" value="1"/>
</dbReference>
<dbReference type="Gene3D" id="3.30.160.20">
    <property type="match status" value="1"/>
</dbReference>
<dbReference type="Gene3D" id="3.30.70.1660">
    <property type="match status" value="1"/>
</dbReference>
<dbReference type="Gene3D" id="6.10.140.1950">
    <property type="match status" value="1"/>
</dbReference>
<dbReference type="HAMAP" id="MF_00093">
    <property type="entry name" value="Rel_fac_1"/>
    <property type="match status" value="1"/>
</dbReference>
<dbReference type="InterPro" id="IPR005139">
    <property type="entry name" value="PCRF"/>
</dbReference>
<dbReference type="InterPro" id="IPR000352">
    <property type="entry name" value="Pep_chain_release_fac_I"/>
</dbReference>
<dbReference type="InterPro" id="IPR045853">
    <property type="entry name" value="Pep_chain_release_fac_I_sf"/>
</dbReference>
<dbReference type="InterPro" id="IPR050057">
    <property type="entry name" value="Prokaryotic/Mito_RF"/>
</dbReference>
<dbReference type="InterPro" id="IPR004373">
    <property type="entry name" value="RF-1"/>
</dbReference>
<dbReference type="NCBIfam" id="TIGR00019">
    <property type="entry name" value="prfA"/>
    <property type="match status" value="1"/>
</dbReference>
<dbReference type="NCBIfam" id="NF001859">
    <property type="entry name" value="PRK00591.1"/>
    <property type="match status" value="1"/>
</dbReference>
<dbReference type="PANTHER" id="PTHR43804">
    <property type="entry name" value="LD18447P"/>
    <property type="match status" value="1"/>
</dbReference>
<dbReference type="PANTHER" id="PTHR43804:SF7">
    <property type="entry name" value="LD18447P"/>
    <property type="match status" value="1"/>
</dbReference>
<dbReference type="Pfam" id="PF03462">
    <property type="entry name" value="PCRF"/>
    <property type="match status" value="1"/>
</dbReference>
<dbReference type="Pfam" id="PF00472">
    <property type="entry name" value="RF-1"/>
    <property type="match status" value="1"/>
</dbReference>
<dbReference type="SMART" id="SM00937">
    <property type="entry name" value="PCRF"/>
    <property type="match status" value="1"/>
</dbReference>
<dbReference type="SUPFAM" id="SSF75620">
    <property type="entry name" value="Release factor"/>
    <property type="match status" value="1"/>
</dbReference>
<protein>
    <recommendedName>
        <fullName evidence="1">Peptide chain release factor 1</fullName>
        <shortName evidence="1">RF-1</shortName>
    </recommendedName>
</protein>
<feature type="chain" id="PRO_0000263237" description="Peptide chain release factor 1">
    <location>
        <begin position="1"/>
        <end position="362"/>
    </location>
</feature>
<feature type="modified residue" description="N5-methylglutamine" evidence="1">
    <location>
        <position position="240"/>
    </location>
</feature>
<proteinExistence type="inferred from homology"/>
<name>RF1_BIFLO</name>
<gene>
    <name evidence="1" type="primary">prfA</name>
    <name type="ordered locus">BL1712</name>
</gene>
<evidence type="ECO:0000255" key="1">
    <source>
        <dbReference type="HAMAP-Rule" id="MF_00093"/>
    </source>
</evidence>
<sequence>MADEQFPAAATALEEYQSIEEQMASPEVVSNPDKLRKLGRRHAELGAIVGAYKAWLQVKDDLAAAQEMAGEDADFAEEAKRLEDELPGVEEKLRTALIPRDPDDARDTIMEIKAGTGGEEAALFAGDLLRMYTRYAEKRGWSVNVQSENTTELGGVKDVQIAIRAKGTPAPEDGVWASMKYEGGVHRVQRIPVTESQGRIQTSAAGVIVFPEADEDDDEIEIDPKDLKIDIFMSSGPGGQSVNTTYSAVRMTHLPTGITVNMQDEKSQIQNRAAALRVLKSRLLAMKHEQEAAEAADMRHSQVRSLDRSERIRTYNFPENRIVDHRTNYKAYNLDAVLDGDLQAVIDSDIQADEADRLANQK</sequence>
<accession>Q8G3P5</accession>
<comment type="function">
    <text evidence="1">Peptide chain release factor 1 directs the termination of translation in response to the peptide chain termination codons UAG and UAA.</text>
</comment>
<comment type="subcellular location">
    <subcellularLocation>
        <location evidence="1">Cytoplasm</location>
    </subcellularLocation>
</comment>
<comment type="PTM">
    <text evidence="1">Methylated by PrmC. Methylation increases the termination efficiency of RF1.</text>
</comment>
<comment type="similarity">
    <text evidence="1">Belongs to the prokaryotic/mitochondrial release factor family.</text>
</comment>